<sequence length="61" mass="6067">MDPNCSCVAGESCTCAGSCKCKQCRCASCKKSCCSCCPVGCAKCAQGCVCKGASDKCSCCA</sequence>
<name>MT1B_HORSE</name>
<comment type="function">
    <text>Metallothioneins have a high content of cysteine residues that bind various heavy metals; these proteins are transcriptionally regulated by both heavy metals and glucocorticoids.</text>
</comment>
<comment type="domain">
    <text>Class I metallothioneins contain 2 metal-binding domains: four divalent ions are chelated within cluster A of the alpha domain and are coordinated via cysteinyl thiolate bridges to 11 cysteine ligands. Cluster B, the corresponding region within the beta domain, can ligate three divalent ions to 9 cysteines.</text>
</comment>
<comment type="similarity">
    <text evidence="2">Belongs to the metallothionein superfamily. Type 1 family.</text>
</comment>
<accession>P02801</accession>
<dbReference type="PIR" id="A03278">
    <property type="entry name" value="SMHOB"/>
</dbReference>
<dbReference type="RefSeq" id="XP_003364645.3">
    <property type="nucleotide sequence ID" value="XM_003364597.4"/>
</dbReference>
<dbReference type="SMR" id="P02801"/>
<dbReference type="STRING" id="9796.ENSECAP00000027291"/>
<dbReference type="PaxDb" id="9796-ENSECAP00000027291"/>
<dbReference type="GeneID" id="100630543"/>
<dbReference type="InParanoid" id="P02801"/>
<dbReference type="Proteomes" id="UP000002281">
    <property type="component" value="Unplaced"/>
</dbReference>
<dbReference type="GO" id="GO:0005737">
    <property type="term" value="C:cytoplasm"/>
    <property type="evidence" value="ECO:0000250"/>
    <property type="project" value="UniProtKB"/>
</dbReference>
<dbReference type="GO" id="GO:0005634">
    <property type="term" value="C:nucleus"/>
    <property type="evidence" value="ECO:0000250"/>
    <property type="project" value="UniProtKB"/>
</dbReference>
<dbReference type="GO" id="GO:0046872">
    <property type="term" value="F:metal ion binding"/>
    <property type="evidence" value="ECO:0000318"/>
    <property type="project" value="GO_Central"/>
</dbReference>
<dbReference type="GO" id="GO:0008270">
    <property type="term" value="F:zinc ion binding"/>
    <property type="evidence" value="ECO:0000250"/>
    <property type="project" value="UniProtKB"/>
</dbReference>
<dbReference type="GO" id="GO:0071276">
    <property type="term" value="P:cellular response to cadmium ion"/>
    <property type="evidence" value="ECO:0000318"/>
    <property type="project" value="GO_Central"/>
</dbReference>
<dbReference type="GO" id="GO:0071280">
    <property type="term" value="P:cellular response to copper ion"/>
    <property type="evidence" value="ECO:0000318"/>
    <property type="project" value="GO_Central"/>
</dbReference>
<dbReference type="GO" id="GO:0071294">
    <property type="term" value="P:cellular response to zinc ion"/>
    <property type="evidence" value="ECO:0000250"/>
    <property type="project" value="UniProtKB"/>
</dbReference>
<dbReference type="GO" id="GO:0010273">
    <property type="term" value="P:detoxification of copper ion"/>
    <property type="evidence" value="ECO:0000318"/>
    <property type="project" value="GO_Central"/>
</dbReference>
<dbReference type="GO" id="GO:0006882">
    <property type="term" value="P:intracellular zinc ion homeostasis"/>
    <property type="evidence" value="ECO:0000318"/>
    <property type="project" value="GO_Central"/>
</dbReference>
<dbReference type="GO" id="GO:0045926">
    <property type="term" value="P:negative regulation of growth"/>
    <property type="evidence" value="ECO:0000250"/>
    <property type="project" value="UniProtKB"/>
</dbReference>
<dbReference type="FunFam" id="4.10.10.10:FF:000001">
    <property type="entry name" value="Metallothionein"/>
    <property type="match status" value="1"/>
</dbReference>
<dbReference type="Gene3D" id="4.10.10.10">
    <property type="entry name" value="Metallothionein Isoform II"/>
    <property type="match status" value="1"/>
</dbReference>
<dbReference type="InterPro" id="IPR017854">
    <property type="entry name" value="Metalthion_dom_sf"/>
</dbReference>
<dbReference type="InterPro" id="IPR023587">
    <property type="entry name" value="Metalthion_dom_sf_vert"/>
</dbReference>
<dbReference type="InterPro" id="IPR000006">
    <property type="entry name" value="Metalthion_vert"/>
</dbReference>
<dbReference type="InterPro" id="IPR018064">
    <property type="entry name" value="Metalthion_vert_metal_BS"/>
</dbReference>
<dbReference type="PANTHER" id="PTHR23299">
    <property type="entry name" value="METALLOTHIONEIN"/>
    <property type="match status" value="1"/>
</dbReference>
<dbReference type="PANTHER" id="PTHR23299:SF59">
    <property type="entry name" value="METALLOTHIONEIN-1B"/>
    <property type="match status" value="1"/>
</dbReference>
<dbReference type="Pfam" id="PF00131">
    <property type="entry name" value="Metallothio"/>
    <property type="match status" value="1"/>
</dbReference>
<dbReference type="PRINTS" id="PR00860">
    <property type="entry name" value="MTVERTEBRATE"/>
</dbReference>
<dbReference type="SUPFAM" id="SSF57868">
    <property type="entry name" value="Metallothionein"/>
    <property type="match status" value="1"/>
</dbReference>
<dbReference type="PROSITE" id="PS00203">
    <property type="entry name" value="METALLOTHIONEIN_VRT"/>
    <property type="match status" value="1"/>
</dbReference>
<feature type="chain" id="PRO_0000197205" description="Metallothionein-1B">
    <location>
        <begin position="1"/>
        <end position="61"/>
    </location>
</feature>
<feature type="region of interest" description="Beta">
    <location>
        <begin position="1"/>
        <end position="29"/>
    </location>
</feature>
<feature type="region of interest" description="Alpha">
    <location>
        <begin position="30"/>
        <end position="61"/>
    </location>
</feature>
<feature type="binding site" evidence="1">
    <location>
        <position position="5"/>
    </location>
    <ligand>
        <name>a divalent metal cation</name>
        <dbReference type="ChEBI" id="CHEBI:60240"/>
        <label>1</label>
        <note>in cluster B</note>
    </ligand>
</feature>
<feature type="binding site" evidence="1">
    <location>
        <position position="7"/>
    </location>
    <ligand>
        <name>a divalent metal cation</name>
        <dbReference type="ChEBI" id="CHEBI:60240"/>
        <label>1</label>
        <note>in cluster B</note>
    </ligand>
</feature>
<feature type="binding site" evidence="1">
    <location>
        <position position="7"/>
    </location>
    <ligand>
        <name>a divalent metal cation</name>
        <dbReference type="ChEBI" id="CHEBI:60240"/>
        <label>2</label>
        <note>in cluster B</note>
    </ligand>
</feature>
<feature type="binding site" evidence="1">
    <location>
        <position position="13"/>
    </location>
    <ligand>
        <name>a divalent metal cation</name>
        <dbReference type="ChEBI" id="CHEBI:60240"/>
        <label>2</label>
        <note>in cluster B</note>
    </ligand>
</feature>
<feature type="binding site" evidence="1">
    <location>
        <position position="15"/>
    </location>
    <ligand>
        <name>a divalent metal cation</name>
        <dbReference type="ChEBI" id="CHEBI:60240"/>
        <label>2</label>
        <note>in cluster B</note>
    </ligand>
</feature>
<feature type="binding site" evidence="1">
    <location>
        <position position="15"/>
    </location>
    <ligand>
        <name>a divalent metal cation</name>
        <dbReference type="ChEBI" id="CHEBI:60240"/>
        <label>3</label>
        <note>in cluster B</note>
    </ligand>
</feature>
<feature type="binding site" evidence="1">
    <location>
        <position position="19"/>
    </location>
    <ligand>
        <name>a divalent metal cation</name>
        <dbReference type="ChEBI" id="CHEBI:60240"/>
        <label>3</label>
        <note>in cluster B</note>
    </ligand>
</feature>
<feature type="binding site" evidence="1">
    <location>
        <position position="21"/>
    </location>
    <ligand>
        <name>a divalent metal cation</name>
        <dbReference type="ChEBI" id="CHEBI:60240"/>
        <label>1</label>
        <note>in cluster B</note>
    </ligand>
</feature>
<feature type="binding site" evidence="1">
    <location>
        <position position="24"/>
    </location>
    <ligand>
        <name>a divalent metal cation</name>
        <dbReference type="ChEBI" id="CHEBI:60240"/>
        <label>1</label>
        <note>in cluster B</note>
    </ligand>
</feature>
<feature type="binding site" evidence="1">
    <location>
        <position position="24"/>
    </location>
    <ligand>
        <name>a divalent metal cation</name>
        <dbReference type="ChEBI" id="CHEBI:60240"/>
        <label>3</label>
        <note>in cluster B</note>
    </ligand>
</feature>
<feature type="binding site" evidence="1">
    <location>
        <position position="26"/>
    </location>
    <ligand>
        <name>a divalent metal cation</name>
        <dbReference type="ChEBI" id="CHEBI:60240"/>
        <label>2</label>
        <note>in cluster B</note>
    </ligand>
</feature>
<feature type="binding site" evidence="1">
    <location>
        <position position="29"/>
    </location>
    <ligand>
        <name>a divalent metal cation</name>
        <dbReference type="ChEBI" id="CHEBI:60240"/>
        <label>3</label>
        <note>in cluster B</note>
    </ligand>
</feature>
<feature type="binding site" evidence="1">
    <location>
        <position position="33"/>
    </location>
    <ligand>
        <name>a divalent metal cation</name>
        <dbReference type="ChEBI" id="CHEBI:60240"/>
        <label>4</label>
        <note>in cluster A</note>
    </ligand>
</feature>
<feature type="binding site" evidence="1">
    <location>
        <position position="34"/>
    </location>
    <ligand>
        <name>a divalent metal cation</name>
        <dbReference type="ChEBI" id="CHEBI:60240"/>
        <label>4</label>
        <note>in cluster A</note>
    </ligand>
</feature>
<feature type="binding site" evidence="1">
    <location>
        <position position="34"/>
    </location>
    <ligand>
        <name>a divalent metal cation</name>
        <dbReference type="ChEBI" id="CHEBI:60240"/>
        <label>5</label>
        <note>in cluster A</note>
    </ligand>
</feature>
<feature type="binding site" evidence="1">
    <location>
        <position position="36"/>
    </location>
    <ligand>
        <name>a divalent metal cation</name>
        <dbReference type="ChEBI" id="CHEBI:60240"/>
        <label>5</label>
        <note>in cluster A</note>
    </ligand>
</feature>
<feature type="binding site" evidence="1">
    <location>
        <position position="37"/>
    </location>
    <ligand>
        <name>a divalent metal cation</name>
        <dbReference type="ChEBI" id="CHEBI:60240"/>
        <label>5</label>
        <note>in cluster A</note>
    </ligand>
</feature>
<feature type="binding site" evidence="1">
    <location>
        <position position="37"/>
    </location>
    <ligand>
        <name>a divalent metal cation</name>
        <dbReference type="ChEBI" id="CHEBI:60240"/>
        <label>6</label>
        <note>in cluster A</note>
    </ligand>
</feature>
<feature type="binding site" evidence="1">
    <location>
        <position position="41"/>
    </location>
    <ligand>
        <name>a divalent metal cation</name>
        <dbReference type="ChEBI" id="CHEBI:60240"/>
        <label>6</label>
        <note>in cluster A</note>
    </ligand>
</feature>
<feature type="binding site" evidence="1">
    <location>
        <position position="44"/>
    </location>
    <ligand>
        <name>a divalent metal cation</name>
        <dbReference type="ChEBI" id="CHEBI:60240"/>
        <label>4</label>
        <note>in cluster A</note>
    </ligand>
</feature>
<feature type="binding site" evidence="1">
    <location>
        <position position="44"/>
    </location>
    <ligand>
        <name>a divalent metal cation</name>
        <dbReference type="ChEBI" id="CHEBI:60240"/>
        <label>6</label>
        <note>in cluster A</note>
    </ligand>
</feature>
<feature type="binding site" evidence="1">
    <location>
        <position position="48"/>
    </location>
    <ligand>
        <name>a divalent metal cation</name>
        <dbReference type="ChEBI" id="CHEBI:60240"/>
        <label>4</label>
        <note>in cluster A</note>
    </ligand>
</feature>
<feature type="binding site" evidence="1">
    <location>
        <position position="50"/>
    </location>
    <ligand>
        <name>a divalent metal cation</name>
        <dbReference type="ChEBI" id="CHEBI:60240"/>
        <label>5</label>
        <note>in cluster A</note>
    </ligand>
</feature>
<feature type="binding site" evidence="1">
    <location>
        <position position="50"/>
    </location>
    <ligand>
        <name>a divalent metal cation</name>
        <dbReference type="ChEBI" id="CHEBI:60240"/>
        <label>7</label>
        <note>in cluster A</note>
    </ligand>
</feature>
<feature type="binding site" evidence="1">
    <location>
        <position position="57"/>
    </location>
    <ligand>
        <name>a divalent metal cation</name>
        <dbReference type="ChEBI" id="CHEBI:60240"/>
        <label>7</label>
        <note>in cluster A</note>
    </ligand>
</feature>
<feature type="binding site" evidence="1">
    <location>
        <position position="59"/>
    </location>
    <ligand>
        <name>a divalent metal cation</name>
        <dbReference type="ChEBI" id="CHEBI:60240"/>
        <label>7</label>
        <note>in cluster A</note>
    </ligand>
</feature>
<feature type="binding site" evidence="1">
    <location>
        <position position="60"/>
    </location>
    <ligand>
        <name>a divalent metal cation</name>
        <dbReference type="ChEBI" id="CHEBI:60240"/>
        <label>6</label>
        <note>in cluster A</note>
    </ligand>
</feature>
<feature type="binding site" evidence="1">
    <location>
        <position position="60"/>
    </location>
    <ligand>
        <name>a divalent metal cation</name>
        <dbReference type="ChEBI" id="CHEBI:60240"/>
        <label>7</label>
        <note>in cluster A</note>
    </ligand>
</feature>
<proteinExistence type="evidence at protein level"/>
<keyword id="KW-0903">Direct protein sequencing</keyword>
<keyword id="KW-0479">Metal-binding</keyword>
<keyword id="KW-0480">Metal-thiolate cluster</keyword>
<keyword id="KW-1185">Reference proteome</keyword>
<reference key="1">
    <citation type="journal article" date="1976" name="Proc. Natl. Acad. Sci. U.S.A.">
        <title>Amino-acid sequence of equine renal metallothionein-1B.</title>
        <authorList>
            <person name="Kojima Y."/>
            <person name="Berger C."/>
            <person name="Vallee B.L."/>
            <person name="Kaegi J.H.R."/>
        </authorList>
    </citation>
    <scope>PROTEIN SEQUENCE</scope>
    <source>
        <tissue>Kidney</tissue>
    </source>
</reference>
<reference key="2">
    <citation type="journal article" date="1987" name="Experientia Suppl.">
        <title>Chemistry and biochemistry of metallothionein.</title>
        <authorList>
            <person name="Kaegi J.H.R."/>
            <person name="Kojima Y."/>
        </authorList>
    </citation>
    <scope>SEQUENCE REVISION TO 58-59</scope>
</reference>
<evidence type="ECO:0000250" key="1">
    <source>
        <dbReference type="UniProtKB" id="P02795"/>
    </source>
</evidence>
<evidence type="ECO:0000305" key="2"/>
<organism>
    <name type="scientific">Equus caballus</name>
    <name type="common">Horse</name>
    <dbReference type="NCBI Taxonomy" id="9796"/>
    <lineage>
        <taxon>Eukaryota</taxon>
        <taxon>Metazoa</taxon>
        <taxon>Chordata</taxon>
        <taxon>Craniata</taxon>
        <taxon>Vertebrata</taxon>
        <taxon>Euteleostomi</taxon>
        <taxon>Mammalia</taxon>
        <taxon>Eutheria</taxon>
        <taxon>Laurasiatheria</taxon>
        <taxon>Perissodactyla</taxon>
        <taxon>Equidae</taxon>
        <taxon>Equus</taxon>
    </lineage>
</organism>
<protein>
    <recommendedName>
        <fullName>Metallothionein-1B</fullName>
        <shortName>MT-1B</shortName>
    </recommendedName>
    <alternativeName>
        <fullName>Metallothionein-IB</fullName>
        <shortName>MT-IB</shortName>
    </alternativeName>
</protein>